<proteinExistence type="evidence at protein level"/>
<evidence type="ECO:0000250" key="1">
    <source>
        <dbReference type="UniProtKB" id="O42652"/>
    </source>
</evidence>
<evidence type="ECO:0000250" key="2">
    <source>
        <dbReference type="UniProtKB" id="P00509"/>
    </source>
</evidence>
<evidence type="ECO:0000250" key="3">
    <source>
        <dbReference type="UniProtKB" id="P23542"/>
    </source>
</evidence>
<evidence type="ECO:0000269" key="4">
    <source>
    </source>
</evidence>
<evidence type="ECO:0000303" key="5">
    <source>
    </source>
</evidence>
<evidence type="ECO:0000305" key="6"/>
<evidence type="ECO:0000305" key="7">
    <source>
    </source>
</evidence>
<keyword id="KW-0032">Aminotransferase</keyword>
<keyword id="KW-0963">Cytoplasm</keyword>
<keyword id="KW-0663">Pyridoxal phosphate</keyword>
<keyword id="KW-1185">Reference proteome</keyword>
<keyword id="KW-0808">Transferase</keyword>
<feature type="chain" id="PRO_0000460401" description="L-tyrosine:2-oxoglutarate aminotransferase ucdG">
    <location>
        <begin position="1"/>
        <end position="523"/>
    </location>
</feature>
<sequence length="523" mass="58567">MSALGTLNSVVRDEIFALNLAFNSDDHPQKVNLSVGAYRSDSGKPWPLPAVQEAEKQLFAEANAFRHEYTTIAGDAGFLEAARDLMFGFDNLQNAAGTAAKLRISSVQTVAGTGANHLGALFLSKYLKPQTVWLSDPTWANHYTIWDLVKVPYKMYPYYSASDGSFDFHGMMSTLESDAQPGDIILLQACAHNPTGLDPSPQQWKDIANLCDRKHLFPFIDAAYQGFATGCTNNDNWIVRYFLNKKPHIDMCVAQSFSKNLGLYGQRVGAFHYVLNEDGKGLRDTVTDHLCQLIRGEYTMGPVAGSDIVKRVLTNPVLRAQWFENMRSMSFRIVAMRKALFDELTRLKTPGSWKHITEMIGMFSYIGLSPTQVEVLKTKYHIYLLQSSRASMSGLNSTNVIYVARAIDETQAFPDLSWRPLPPRSGHPIYHGLEPGQVILPKGTVRFASWRSLPVDTEFNRDVPVVLRDGVTIYLDVFRPTETARSSPPYTSEANMERRGQAAYSSTPLRRIGLTFLNRTLKI</sequence>
<dbReference type="EC" id="2.6.1.5" evidence="7"/>
<dbReference type="EMBL" id="JOMC01000221">
    <property type="protein sequence ID" value="KIA75362.1"/>
    <property type="molecule type" value="Genomic_DNA"/>
</dbReference>
<dbReference type="SMR" id="A0A0C1E1D0"/>
<dbReference type="Proteomes" id="UP000053475">
    <property type="component" value="Unassembled WGS sequence"/>
</dbReference>
<dbReference type="GO" id="GO:0005829">
    <property type="term" value="C:cytosol"/>
    <property type="evidence" value="ECO:0007669"/>
    <property type="project" value="TreeGrafter"/>
</dbReference>
<dbReference type="GO" id="GO:0004069">
    <property type="term" value="F:L-aspartate:2-oxoglutarate aminotransferase activity"/>
    <property type="evidence" value="ECO:0007669"/>
    <property type="project" value="UniProtKB-EC"/>
</dbReference>
<dbReference type="GO" id="GO:0004838">
    <property type="term" value="F:L-tyrosine-2-oxoglutarate transaminase activity"/>
    <property type="evidence" value="ECO:0007669"/>
    <property type="project" value="RHEA"/>
</dbReference>
<dbReference type="GO" id="GO:0030170">
    <property type="term" value="F:pyridoxal phosphate binding"/>
    <property type="evidence" value="ECO:0007669"/>
    <property type="project" value="InterPro"/>
</dbReference>
<dbReference type="GO" id="GO:0006532">
    <property type="term" value="P:aspartate biosynthetic process"/>
    <property type="evidence" value="ECO:0007669"/>
    <property type="project" value="TreeGrafter"/>
</dbReference>
<dbReference type="CDD" id="cd00609">
    <property type="entry name" value="AAT_like"/>
    <property type="match status" value="1"/>
</dbReference>
<dbReference type="FunFam" id="3.40.640.10:FF:000066">
    <property type="entry name" value="Aspartate aminotransferase"/>
    <property type="match status" value="1"/>
</dbReference>
<dbReference type="Gene3D" id="3.90.1150.10">
    <property type="entry name" value="Aspartate Aminotransferase, domain 1"/>
    <property type="match status" value="1"/>
</dbReference>
<dbReference type="Gene3D" id="3.40.640.10">
    <property type="entry name" value="Type I PLP-dependent aspartate aminotransferase-like (Major domain)"/>
    <property type="match status" value="1"/>
</dbReference>
<dbReference type="InterPro" id="IPR004839">
    <property type="entry name" value="Aminotransferase_I/II_large"/>
</dbReference>
<dbReference type="InterPro" id="IPR000796">
    <property type="entry name" value="Asp_trans"/>
</dbReference>
<dbReference type="InterPro" id="IPR004838">
    <property type="entry name" value="NHTrfase_class1_PyrdxlP-BS"/>
</dbReference>
<dbReference type="InterPro" id="IPR015424">
    <property type="entry name" value="PyrdxlP-dep_Trfase"/>
</dbReference>
<dbReference type="InterPro" id="IPR015421">
    <property type="entry name" value="PyrdxlP-dep_Trfase_major"/>
</dbReference>
<dbReference type="InterPro" id="IPR015422">
    <property type="entry name" value="PyrdxlP-dep_Trfase_small"/>
</dbReference>
<dbReference type="NCBIfam" id="NF006719">
    <property type="entry name" value="PRK09257.1"/>
    <property type="match status" value="1"/>
</dbReference>
<dbReference type="PANTHER" id="PTHR11879">
    <property type="entry name" value="ASPARTATE AMINOTRANSFERASE"/>
    <property type="match status" value="1"/>
</dbReference>
<dbReference type="PANTHER" id="PTHR11879:SF20">
    <property type="entry name" value="ASPARTATE AMINOTRANSFERASE"/>
    <property type="match status" value="1"/>
</dbReference>
<dbReference type="Pfam" id="PF00155">
    <property type="entry name" value="Aminotran_1_2"/>
    <property type="match status" value="1"/>
</dbReference>
<dbReference type="PRINTS" id="PR00799">
    <property type="entry name" value="TRANSAMINASE"/>
</dbReference>
<dbReference type="SUPFAM" id="SSF53383">
    <property type="entry name" value="PLP-dependent transferases"/>
    <property type="match status" value="1"/>
</dbReference>
<dbReference type="PROSITE" id="PS00105">
    <property type="entry name" value="AA_TRANSFER_CLASS_1"/>
    <property type="match status" value="1"/>
</dbReference>
<accession>A0A0C1E1D0</accession>
<name>UCDG_ASPUT</name>
<organism>
    <name type="scientific">Aspergillus ustus</name>
    <dbReference type="NCBI Taxonomy" id="40382"/>
    <lineage>
        <taxon>Eukaryota</taxon>
        <taxon>Fungi</taxon>
        <taxon>Dikarya</taxon>
        <taxon>Ascomycota</taxon>
        <taxon>Pezizomycotina</taxon>
        <taxon>Eurotiomycetes</taxon>
        <taxon>Eurotiomycetidae</taxon>
        <taxon>Eurotiales</taxon>
        <taxon>Aspergillaceae</taxon>
        <taxon>Aspergillus</taxon>
        <taxon>Aspergillus subgen. Nidulantes</taxon>
    </lineage>
</organism>
<protein>
    <recommendedName>
        <fullName evidence="5">L-tyrosine:2-oxoglutarate aminotransferase ucdG</fullName>
        <ecNumber evidence="7">2.6.1.5</ecNumber>
    </recommendedName>
    <alternativeName>
        <fullName evidence="5">Uscandidusin biosynthesis cluster protein G</fullName>
    </alternativeName>
</protein>
<comment type="function">
    <text evidence="4 7">Nonribosomal peptide synthetase that mediates the biosynthesis of usterphenyllins and uscandidusins, p-terphenyl derivatives (PubMed:37607357). Within the pathway, ucdG is probably involved in the conversion of L-tyrosine into 4-hydroxyphenylpyruvate (HPPA) as a precursor for the usterphenyllin and uscandidusin biosynthesis (Probable). UcdE further prenylates position C-14 of ring C of usterphenyllin B to form usterphenyllin A (PubMed:37607357). The pathway begin with the biosynthesis of 4-hydroxyphenylpyruvate (HPPA) from L-tyrosine, possibly by the aminotransferase ucdG. The nonribosomal peptide synthetase ucdA then condenses two HPPA units to produce atromentin. The key step in this pathway is the reduction and dehydration of atromentin to form a terphenyl triol intermediate, performed by the NAD-dependent dehydrogenase ucdB. Further O-methylation by the methyltransferase ucdC forms terphenyllin carrying two methoxy moieties at C-9 and C-12, and subsequent dihydroxylation at C-3 of ring A and C-15 of ring C by the flavin-dependent oxygenase ucdD leads to 3,15-dihydroxyterphenyllin. Prenylation by ucdE at position C-5 of ring A forms usterphenyllin B, and is followed by a second prenylation at position C-14 of ring C to form usterphenyllin A. The following furan ring formation that leads to uscandidusins A and B was proven to be an unexpected spontaneous non-enzymatic reaction (PubMed:37607357).</text>
</comment>
<comment type="catalytic activity">
    <reaction evidence="7">
        <text>L-tyrosine + 2-oxoglutarate = 3-(4-hydroxyphenyl)pyruvate + L-glutamate</text>
        <dbReference type="Rhea" id="RHEA:15093"/>
        <dbReference type="ChEBI" id="CHEBI:16810"/>
        <dbReference type="ChEBI" id="CHEBI:29985"/>
        <dbReference type="ChEBI" id="CHEBI:36242"/>
        <dbReference type="ChEBI" id="CHEBI:58315"/>
        <dbReference type="EC" id="2.6.1.5"/>
    </reaction>
    <physiologicalReaction direction="left-to-right" evidence="7">
        <dbReference type="Rhea" id="RHEA:15094"/>
    </physiologicalReaction>
</comment>
<comment type="cofactor">
    <cofactor evidence="2">
        <name>pyridoxal 5'-phosphate</name>
        <dbReference type="ChEBI" id="CHEBI:597326"/>
    </cofactor>
</comment>
<comment type="pathway">
    <text evidence="4">Secondary metabolite biosynthesis.</text>
</comment>
<comment type="subunit">
    <text evidence="3">Homodimer.</text>
</comment>
<comment type="subcellular location">
    <subcellularLocation>
        <location evidence="1">Cytoplasm</location>
    </subcellularLocation>
</comment>
<comment type="disruption phenotype">
    <text evidence="4">Lieds to a slightly decreased formation of usterphenyllins and uscandidusins in Aspergillus nidulans.</text>
</comment>
<comment type="similarity">
    <text evidence="6">Belongs to the class-I pyridoxal-phosphate-dependent aminotransferase family.</text>
</comment>
<reference key="1">
    <citation type="submission" date="2014-11" db="EMBL/GenBank/DDBJ databases">
        <title>Genomics derived discovery of secondary metabolites biosynthetic gene clusters in Aspergillus ustus.</title>
        <authorList>
            <person name="Pi B."/>
            <person name="Dai F."/>
            <person name="Song X."/>
            <person name="Zhu C."/>
            <person name="Li H."/>
            <person name="Yu D."/>
        </authorList>
    </citation>
    <scope>NUCLEOTIDE SEQUENCE [LARGE SCALE GENOMIC DNA]</scope>
    <source>
        <strain>3.3904</strain>
    </source>
</reference>
<reference key="2">
    <citation type="journal article" date="2023" name="Org. Lett.">
        <title>Biosynthesis of p-terphenyls in Aspergillus ustus implies enzymatic reductive dehydration and spontaneous dibenzofuran formation.</title>
        <authorList>
            <person name="Janzen D.J."/>
            <person name="Zhou J."/>
            <person name="Li S.M."/>
        </authorList>
    </citation>
    <scope>FUNCTION</scope>
    <scope>CATALYTIC ACTIVITY</scope>
    <scope>DISRUPTION PHENOTYPE</scope>
    <scope>PATHWAY</scope>
</reference>
<gene>
    <name evidence="5" type="primary">ucdG</name>
    <name type="ORF">HK57_00191</name>
</gene>